<feature type="chain" id="PRO_0000440610" description="UDP-glycosyltransferase 76B1">
    <location>
        <begin position="1"/>
        <end position="447"/>
    </location>
</feature>
<feature type="binding site" evidence="1">
    <location>
        <position position="269"/>
    </location>
    <ligand>
        <name>UDP-alpha-D-glucose</name>
        <dbReference type="ChEBI" id="CHEBI:58885"/>
    </ligand>
</feature>
<feature type="binding site" evidence="1">
    <location>
        <begin position="327"/>
        <end position="328"/>
    </location>
    <ligand>
        <name>UDP-alpha-D-glucose</name>
        <dbReference type="ChEBI" id="CHEBI:58885"/>
    </ligand>
</feature>
<feature type="binding site" evidence="1">
    <location>
        <begin position="345"/>
        <end position="353"/>
    </location>
    <ligand>
        <name>UDP-alpha-D-glucose</name>
        <dbReference type="ChEBI" id="CHEBI:58885"/>
    </ligand>
</feature>
<feature type="binding site" evidence="1">
    <location>
        <begin position="367"/>
        <end position="370"/>
    </location>
    <ligand>
        <name>UDP-alpha-D-glucose</name>
        <dbReference type="ChEBI" id="CHEBI:58885"/>
    </ligand>
</feature>
<feature type="sequence conflict" description="In Ref. 4; BAC43564." evidence="4" ref="4">
    <original>E</original>
    <variation>G</variation>
    <location>
        <position position="120"/>
    </location>
</feature>
<accession>Q9C768</accession>
<accession>Q8GWA0</accession>
<accession>Q9CAY9</accession>
<reference key="1">
    <citation type="journal article" date="2014" name="Plant J.">
        <title>The plant glycosyltransferase clone collection for functional genomics.</title>
        <authorList>
            <person name="Lao J."/>
            <person name="Oikawa A."/>
            <person name="Bromley J.R."/>
            <person name="McInerney P."/>
            <person name="Suttangkakul A."/>
            <person name="Smith-Moritz A.M."/>
            <person name="Plahar H."/>
            <person name="Chiu T.-Y."/>
            <person name="Gonzalez Fernandez-Nino S.M.G."/>
            <person name="Ebert B."/>
            <person name="Yang F."/>
            <person name="Christiansen K.M."/>
            <person name="Hansen S.F."/>
            <person name="Stonebloom S."/>
            <person name="Adams P.D."/>
            <person name="Ronald P.C."/>
            <person name="Hillson N.J."/>
            <person name="Hadi M.Z."/>
            <person name="Vega-Sanchez M.E."/>
            <person name="Loque D."/>
            <person name="Scheller H.V."/>
            <person name="Heazlewood J.L."/>
        </authorList>
    </citation>
    <scope>NUCLEOTIDE SEQUENCE [MRNA]</scope>
</reference>
<reference key="2">
    <citation type="journal article" date="2000" name="Nature">
        <title>Sequence and analysis of chromosome 3 of the plant Arabidopsis thaliana.</title>
        <authorList>
            <person name="Salanoubat M."/>
            <person name="Lemcke K."/>
            <person name="Rieger M."/>
            <person name="Ansorge W."/>
            <person name="Unseld M."/>
            <person name="Fartmann B."/>
            <person name="Valle G."/>
            <person name="Bloecker H."/>
            <person name="Perez-Alonso M."/>
            <person name="Obermaier B."/>
            <person name="Delseny M."/>
            <person name="Boutry M."/>
            <person name="Grivell L.A."/>
            <person name="Mache R."/>
            <person name="Puigdomenech P."/>
            <person name="De Simone V."/>
            <person name="Choisne N."/>
            <person name="Artiguenave F."/>
            <person name="Robert C."/>
            <person name="Brottier P."/>
            <person name="Wincker P."/>
            <person name="Cattolico L."/>
            <person name="Weissenbach J."/>
            <person name="Saurin W."/>
            <person name="Quetier F."/>
            <person name="Schaefer M."/>
            <person name="Mueller-Auer S."/>
            <person name="Gabel C."/>
            <person name="Fuchs M."/>
            <person name="Benes V."/>
            <person name="Wurmbach E."/>
            <person name="Drzonek H."/>
            <person name="Erfle H."/>
            <person name="Jordan N."/>
            <person name="Bangert S."/>
            <person name="Wiedelmann R."/>
            <person name="Kranz H."/>
            <person name="Voss H."/>
            <person name="Holland R."/>
            <person name="Brandt P."/>
            <person name="Nyakatura G."/>
            <person name="Vezzi A."/>
            <person name="D'Angelo M."/>
            <person name="Pallavicini A."/>
            <person name="Toppo S."/>
            <person name="Simionati B."/>
            <person name="Conrad A."/>
            <person name="Hornischer K."/>
            <person name="Kauer G."/>
            <person name="Loehnert T.-H."/>
            <person name="Nordsiek G."/>
            <person name="Reichelt J."/>
            <person name="Scharfe M."/>
            <person name="Schoen O."/>
            <person name="Bargues M."/>
            <person name="Terol J."/>
            <person name="Climent J."/>
            <person name="Navarro P."/>
            <person name="Collado C."/>
            <person name="Perez-Perez A."/>
            <person name="Ottenwaelder B."/>
            <person name="Duchemin D."/>
            <person name="Cooke R."/>
            <person name="Laudie M."/>
            <person name="Berger-Llauro C."/>
            <person name="Purnelle B."/>
            <person name="Masuy D."/>
            <person name="de Haan M."/>
            <person name="Maarse A.C."/>
            <person name="Alcaraz J.-P."/>
            <person name="Cottet A."/>
            <person name="Casacuberta E."/>
            <person name="Monfort A."/>
            <person name="Argiriou A."/>
            <person name="Flores M."/>
            <person name="Liguori R."/>
            <person name="Vitale D."/>
            <person name="Mannhaupt G."/>
            <person name="Haase D."/>
            <person name="Schoof H."/>
            <person name="Rudd S."/>
            <person name="Zaccaria P."/>
            <person name="Mewes H.-W."/>
            <person name="Mayer K.F.X."/>
            <person name="Kaul S."/>
            <person name="Town C.D."/>
            <person name="Koo H.L."/>
            <person name="Tallon L.J."/>
            <person name="Jenkins J."/>
            <person name="Rooney T."/>
            <person name="Rizzo M."/>
            <person name="Walts A."/>
            <person name="Utterback T."/>
            <person name="Fujii C.Y."/>
            <person name="Shea T.P."/>
            <person name="Creasy T.H."/>
            <person name="Haas B."/>
            <person name="Maiti R."/>
            <person name="Wu D."/>
            <person name="Peterson J."/>
            <person name="Van Aken S."/>
            <person name="Pai G."/>
            <person name="Militscher J."/>
            <person name="Sellers P."/>
            <person name="Gill J.E."/>
            <person name="Feldblyum T.V."/>
            <person name="Preuss D."/>
            <person name="Lin X."/>
            <person name="Nierman W.C."/>
            <person name="Salzberg S.L."/>
            <person name="White O."/>
            <person name="Venter J.C."/>
            <person name="Fraser C.M."/>
            <person name="Kaneko T."/>
            <person name="Nakamura Y."/>
            <person name="Sato S."/>
            <person name="Kato T."/>
            <person name="Asamizu E."/>
            <person name="Sasamoto S."/>
            <person name="Kimura T."/>
            <person name="Idesawa K."/>
            <person name="Kawashima K."/>
            <person name="Kishida Y."/>
            <person name="Kiyokawa C."/>
            <person name="Kohara M."/>
            <person name="Matsumoto M."/>
            <person name="Matsuno A."/>
            <person name="Muraki A."/>
            <person name="Nakayama S."/>
            <person name="Nakazaki N."/>
            <person name="Shinpo S."/>
            <person name="Takeuchi C."/>
            <person name="Wada T."/>
            <person name="Watanabe A."/>
            <person name="Yamada M."/>
            <person name="Yasuda M."/>
            <person name="Tabata S."/>
        </authorList>
    </citation>
    <scope>NUCLEOTIDE SEQUENCE [LARGE SCALE GENOMIC DNA]</scope>
    <source>
        <strain>cv. Columbia</strain>
    </source>
</reference>
<reference key="3">
    <citation type="journal article" date="2017" name="Plant J.">
        <title>Araport11: a complete reannotation of the Arabidopsis thaliana reference genome.</title>
        <authorList>
            <person name="Cheng C.Y."/>
            <person name="Krishnakumar V."/>
            <person name="Chan A.P."/>
            <person name="Thibaud-Nissen F."/>
            <person name="Schobel S."/>
            <person name="Town C.D."/>
        </authorList>
    </citation>
    <scope>GENOME REANNOTATION</scope>
    <source>
        <strain>cv. Columbia</strain>
    </source>
</reference>
<reference key="4">
    <citation type="journal article" date="2002" name="Science">
        <title>Functional annotation of a full-length Arabidopsis cDNA collection.</title>
        <authorList>
            <person name="Seki M."/>
            <person name="Narusaka M."/>
            <person name="Kamiya A."/>
            <person name="Ishida J."/>
            <person name="Satou M."/>
            <person name="Sakurai T."/>
            <person name="Nakajima M."/>
            <person name="Enju A."/>
            <person name="Akiyama K."/>
            <person name="Oono Y."/>
            <person name="Muramatsu M."/>
            <person name="Hayashizaki Y."/>
            <person name="Kawai J."/>
            <person name="Carninci P."/>
            <person name="Itoh M."/>
            <person name="Ishii Y."/>
            <person name="Arakawa T."/>
            <person name="Shibata K."/>
            <person name="Shinagawa A."/>
            <person name="Shinozaki K."/>
        </authorList>
    </citation>
    <scope>NUCLEOTIDE SEQUENCE [LARGE SCALE MRNA]</scope>
    <source>
        <strain>cv. Columbia</strain>
    </source>
</reference>
<reference key="5">
    <citation type="submission" date="2006-08" db="EMBL/GenBank/DDBJ databases">
        <title>Arabidopsis ORF Clones.</title>
        <authorList>
            <person name="Quinitio C."/>
            <person name="Chen H."/>
            <person name="Kim C.J."/>
            <person name="Shinn P."/>
            <person name="Ecker J.R."/>
        </authorList>
    </citation>
    <scope>NUCLEOTIDE SEQUENCE [LARGE SCALE MRNA]</scope>
    <source>
        <strain>cv. Columbia</strain>
    </source>
</reference>
<reference key="6">
    <citation type="journal article" date="2011" name="Plant Cell">
        <title>The Arabidopsis glucosyltransferase UGT76B1 conjugates isoleucic acid and modulates plant defense and senescence.</title>
        <authorList>
            <person name="von Saint Paul V."/>
            <person name="Zhang W."/>
            <person name="Kanawati B."/>
            <person name="Geist B."/>
            <person name="Faus-Kessler T."/>
            <person name="Schmitt-Kopplin P."/>
            <person name="Schaeffner A.R."/>
        </authorList>
    </citation>
    <scope>FUNCTION</scope>
    <scope>INDUCTION</scope>
    <scope>DISRUPTION PHENOTYPE</scope>
</reference>
<protein>
    <recommendedName>
        <fullName evidence="4">UDP-glycosyltransferase 76B1</fullName>
        <ecNumber evidence="4">2.4.1.-</ecNumber>
    </recommendedName>
</protein>
<sequence length="447" mass="50705">METRETKPVIFLFPFPLQGHLNPMFQLANIFFNRGFSITVIHTEFNSPNSSNFPHFTFVSIPDSLSEPESYPDVIEILHDLNSKCVAPFGDCLKKLISEEPTAACVIVDALWYFTHDLTEKFNFPRIVLRTVNLSAFVAFSKFHVLREKGYLSLQETKADSPVPELPYLRMKDLPWFQTEDPRSGDKLQIGVMKSLKSSSGIIFNAIEDLETDQLDEARIEFPVPLFCIGPFHRYVSASSSSLLAHDMTCLSWLDKQATNSVIYASLGSIASIDESEFLEIAWGLRNSNQPFLWVVRPGLIHGKEWIEILPKGFIENLEGRGKIVKWAPQPEVLAHRATGGFLTHCGWNSTLEGICEAIPMICRPSFGDQRVNARYINDVWKIGLHLENKVERLVIENAVRTLMTSSEGEEIRKRIMPMKETVEQCLKLGGSSFRNLENLIAYILSF</sequence>
<evidence type="ECO:0000250" key="1">
    <source>
        <dbReference type="UniProtKB" id="Q9M156"/>
    </source>
</evidence>
<evidence type="ECO:0000269" key="2">
    <source>
    </source>
</evidence>
<evidence type="ECO:0000303" key="3">
    <source>
    </source>
</evidence>
<evidence type="ECO:0000305" key="4"/>
<evidence type="ECO:0000312" key="5">
    <source>
        <dbReference type="Araport" id="AT3G11340"/>
    </source>
</evidence>
<evidence type="ECO:0000312" key="6">
    <source>
        <dbReference type="EMBL" id="AAG50970.1"/>
    </source>
</evidence>
<evidence type="ECO:0000312" key="7">
    <source>
        <dbReference type="EMBL" id="AAG51429.1"/>
    </source>
</evidence>
<evidence type="ECO:0000312" key="8">
    <source>
        <dbReference type="EMBL" id="AEE75032.1"/>
    </source>
</evidence>
<proteinExistence type="evidence at transcript level"/>
<organism>
    <name type="scientific">Arabidopsis thaliana</name>
    <name type="common">Mouse-ear cress</name>
    <dbReference type="NCBI Taxonomy" id="3702"/>
    <lineage>
        <taxon>Eukaryota</taxon>
        <taxon>Viridiplantae</taxon>
        <taxon>Streptophyta</taxon>
        <taxon>Embryophyta</taxon>
        <taxon>Tracheophyta</taxon>
        <taxon>Spermatophyta</taxon>
        <taxon>Magnoliopsida</taxon>
        <taxon>eudicotyledons</taxon>
        <taxon>Gunneridae</taxon>
        <taxon>Pentapetalae</taxon>
        <taxon>rosids</taxon>
        <taxon>malvids</taxon>
        <taxon>Brassicales</taxon>
        <taxon>Brassicaceae</taxon>
        <taxon>Camelineae</taxon>
        <taxon>Arabidopsis</taxon>
    </lineage>
</organism>
<comment type="function">
    <text evidence="2">Glycosylates the amino acid-related molecules isoleucic acid (2-hydroxy-3-methylpentanoic acid) and valic acid (2-hydroxy-3-methylbutyric acid). Acts as a negative regulator of salicylic acid (SA)-dependent plant defense in the absence of pathogens and promotes the jasmonate (JA) response. Negatively influences the onset of senescence.</text>
</comment>
<comment type="tissue specificity">
    <text evidence="2">Expressed in roots, leaves, hydathodes, sepals and style.</text>
</comment>
<comment type="induction">
    <text evidence="2">Induced by wounding and the bacterial pathogen Pseudomonas syringae pv. tomato (avirulent avrRpm1 strain).</text>
</comment>
<comment type="disruption phenotype">
    <text evidence="2">Reduced rosette size, early leaf senescence, enhanced resistance to the biotrophic pathogen Pseudomonas syringae, increased susceptibility toward necrotrophic Alternaria brassicicola and constitutively elevated salicylic acid (SA) levels.</text>
</comment>
<comment type="similarity">
    <text evidence="4">Belongs to the UDP-glycosyltransferase family.</text>
</comment>
<name>U76B1_ARATH</name>
<dbReference type="EC" id="2.4.1.-" evidence="4"/>
<dbReference type="EMBL" id="KJ138830">
    <property type="protein sequence ID" value="AHL38770.1"/>
    <property type="molecule type" value="mRNA"/>
</dbReference>
<dbReference type="EMBL" id="AC008153">
    <property type="protein sequence ID" value="AAG51429.1"/>
    <property type="molecule type" value="Genomic_DNA"/>
</dbReference>
<dbReference type="EMBL" id="AC073395">
    <property type="protein sequence ID" value="AAG50970.1"/>
    <property type="molecule type" value="Genomic_DNA"/>
</dbReference>
<dbReference type="EMBL" id="CP002686">
    <property type="protein sequence ID" value="AEE75032.1"/>
    <property type="molecule type" value="Genomic_DNA"/>
</dbReference>
<dbReference type="EMBL" id="AK118988">
    <property type="protein sequence ID" value="BAC43564.1"/>
    <property type="molecule type" value="mRNA"/>
</dbReference>
<dbReference type="EMBL" id="BT026457">
    <property type="protein sequence ID" value="ABH04564.1"/>
    <property type="molecule type" value="mRNA"/>
</dbReference>
<dbReference type="RefSeq" id="NP_187742.1">
    <property type="nucleotide sequence ID" value="NM_111968.4"/>
</dbReference>
<dbReference type="SMR" id="Q9C768"/>
<dbReference type="FunCoup" id="Q9C768">
    <property type="interactions" value="239"/>
</dbReference>
<dbReference type="STRING" id="3702.Q9C768"/>
<dbReference type="CAZy" id="GT1">
    <property type="family name" value="Glycosyltransferase Family 1"/>
</dbReference>
<dbReference type="GlyGen" id="Q9C768">
    <property type="glycosylation" value="1 site"/>
</dbReference>
<dbReference type="SwissPalm" id="Q9C768"/>
<dbReference type="PaxDb" id="3702-AT3G11340.1"/>
<dbReference type="ProteomicsDB" id="228646"/>
<dbReference type="EnsemblPlants" id="AT3G11340.1">
    <property type="protein sequence ID" value="AT3G11340.1"/>
    <property type="gene ID" value="AT3G11340"/>
</dbReference>
<dbReference type="GeneID" id="820307"/>
<dbReference type="Gramene" id="AT3G11340.1">
    <property type="protein sequence ID" value="AT3G11340.1"/>
    <property type="gene ID" value="AT3G11340"/>
</dbReference>
<dbReference type="KEGG" id="ath:AT3G11340"/>
<dbReference type="Araport" id="AT3G11340"/>
<dbReference type="TAIR" id="AT3G11340">
    <property type="gene designation" value="UGT76B1"/>
</dbReference>
<dbReference type="eggNOG" id="KOG1192">
    <property type="taxonomic scope" value="Eukaryota"/>
</dbReference>
<dbReference type="HOGENOM" id="CLU_001724_0_0_1"/>
<dbReference type="InParanoid" id="Q9C768"/>
<dbReference type="OMA" id="PWFQTED"/>
<dbReference type="OrthoDB" id="5835829at2759"/>
<dbReference type="PhylomeDB" id="Q9C768"/>
<dbReference type="BioCyc" id="ARA:AT3G11340-MONOMER"/>
<dbReference type="PRO" id="PR:Q9C768"/>
<dbReference type="Proteomes" id="UP000006548">
    <property type="component" value="Chromosome 3"/>
</dbReference>
<dbReference type="ExpressionAtlas" id="Q9C768">
    <property type="expression patterns" value="baseline and differential"/>
</dbReference>
<dbReference type="GO" id="GO:0046527">
    <property type="term" value="F:glucosyltransferase activity"/>
    <property type="evidence" value="ECO:0000315"/>
    <property type="project" value="TAIR"/>
</dbReference>
<dbReference type="GO" id="GO:0052640">
    <property type="term" value="F:salicylic acid glucosyltransferase (glucoside-forming) activity"/>
    <property type="evidence" value="ECO:0000314"/>
    <property type="project" value="TAIR"/>
</dbReference>
<dbReference type="GO" id="GO:0008194">
    <property type="term" value="F:UDP-glycosyltransferase activity"/>
    <property type="evidence" value="ECO:0000314"/>
    <property type="project" value="TAIR"/>
</dbReference>
<dbReference type="GO" id="GO:0006952">
    <property type="term" value="P:defense response"/>
    <property type="evidence" value="ECO:0000315"/>
    <property type="project" value="TAIR"/>
</dbReference>
<dbReference type="GO" id="GO:0010150">
    <property type="term" value="P:leaf senescence"/>
    <property type="evidence" value="ECO:0000315"/>
    <property type="project" value="TAIR"/>
</dbReference>
<dbReference type="GO" id="GO:0002239">
    <property type="term" value="P:response to oomycetes"/>
    <property type="evidence" value="ECO:0000270"/>
    <property type="project" value="TAIR"/>
</dbReference>
<dbReference type="CDD" id="cd03784">
    <property type="entry name" value="GT1_Gtf-like"/>
    <property type="match status" value="1"/>
</dbReference>
<dbReference type="FunFam" id="3.40.50.2000:FF:000040">
    <property type="entry name" value="UDP-glycosyltransferase 76C1"/>
    <property type="match status" value="1"/>
</dbReference>
<dbReference type="FunFam" id="3.40.50.2000:FF:000120">
    <property type="entry name" value="UDP-glycosyltransferase 76C1"/>
    <property type="match status" value="1"/>
</dbReference>
<dbReference type="Gene3D" id="3.40.50.2000">
    <property type="entry name" value="Glycogen Phosphorylase B"/>
    <property type="match status" value="2"/>
</dbReference>
<dbReference type="InterPro" id="IPR002213">
    <property type="entry name" value="UDP_glucos_trans"/>
</dbReference>
<dbReference type="InterPro" id="IPR035595">
    <property type="entry name" value="UDP_glycos_trans_CS"/>
</dbReference>
<dbReference type="PANTHER" id="PTHR11926">
    <property type="entry name" value="GLUCOSYL/GLUCURONOSYL TRANSFERASES"/>
    <property type="match status" value="1"/>
</dbReference>
<dbReference type="PANTHER" id="PTHR11926:SF1531">
    <property type="entry name" value="UDP-GLYCOSYLTRANSFERASE 76B1"/>
    <property type="match status" value="1"/>
</dbReference>
<dbReference type="Pfam" id="PF00201">
    <property type="entry name" value="UDPGT"/>
    <property type="match status" value="1"/>
</dbReference>
<dbReference type="SUPFAM" id="SSF53756">
    <property type="entry name" value="UDP-Glycosyltransferase/glycogen phosphorylase"/>
    <property type="match status" value="1"/>
</dbReference>
<dbReference type="PROSITE" id="PS00375">
    <property type="entry name" value="UDPGT"/>
    <property type="match status" value="1"/>
</dbReference>
<gene>
    <name evidence="3" type="primary">UGT76B1</name>
    <name evidence="5 8" type="ordered locus">At3g11340</name>
    <name evidence="6" type="ORF">F11B9.23</name>
    <name evidence="7" type="ORF">F24K9.1</name>
</gene>
<keyword id="KW-0328">Glycosyltransferase</keyword>
<keyword id="KW-0611">Plant defense</keyword>
<keyword id="KW-1185">Reference proteome</keyword>
<keyword id="KW-0808">Transferase</keyword>